<organismHost>
    <name type="scientific">Homo sapiens</name>
    <name type="common">Human</name>
    <dbReference type="NCBI Taxonomy" id="9606"/>
</organismHost>
<organism>
    <name type="scientific">Human herpesvirus 2 (strain 333)</name>
    <name type="common">HHV-2</name>
    <name type="synonym">Human herpes simplex virus 2</name>
    <dbReference type="NCBI Taxonomy" id="10313"/>
    <lineage>
        <taxon>Viruses</taxon>
        <taxon>Duplodnaviria</taxon>
        <taxon>Heunggongvirae</taxon>
        <taxon>Peploviricota</taxon>
        <taxon>Herviviricetes</taxon>
        <taxon>Herpesvirales</taxon>
        <taxon>Orthoherpesviridae</taxon>
        <taxon>Alphaherpesvirinae</taxon>
        <taxon>Simplexvirus</taxon>
        <taxon>Simplexvirus humanalpha2</taxon>
        <taxon>Human herpesvirus 2</taxon>
    </lineage>
</organism>
<reference key="1">
    <citation type="journal article" date="1987" name="J. Virol.">
        <title>Structure and expression of the herpes simplex virus type 2 glycoprotein gB gene.</title>
        <authorList>
            <person name="Stuve L.L."/>
            <person name="Brown-Shimer S."/>
            <person name="Pachl C."/>
            <person name="Najarian R."/>
            <person name="Dina D."/>
            <person name="Burke R.L."/>
        </authorList>
    </citation>
    <scope>NUCLEOTIDE SEQUENCE [GENOMIC DNA]</scope>
</reference>
<reference key="2">
    <citation type="journal article" date="1987" name="Can. J. Microbiol.">
        <title>The nucleotide sequence of herpes simplex virus type 2 (333) glycoprotein gB2 and analysis of predicted antigenic sites.</title>
        <authorList>
            <person name="Zwaagstra J.C."/>
            <person name="Leung W.C."/>
        </authorList>
    </citation>
    <scope>NUCLEOTIDE SEQUENCE [GENOMIC DNA]</scope>
</reference>
<reference key="3">
    <citation type="journal article" date="1996" name="J. Virol.">
        <title>Disulfide bonds of herpes simplex virus type 2 glycoprotein gB.</title>
        <authorList>
            <person name="Norais N."/>
            <person name="Tang D."/>
            <person name="Kaur S."/>
            <person name="Chamberlain S.H."/>
            <person name="Masiarz F.R."/>
            <person name="Burke R.L."/>
            <person name="Marcus F."/>
        </authorList>
    </citation>
    <scope>DISULFIDE BONDS</scope>
</reference>
<comment type="function">
    <text evidence="1">Envelope glycoprotein that forms spikes at the surface of virion envelope. Essential for the initial attachment to heparan sulfate moieties of the host cell surface proteoglycans. Involved in fusion of viral and cellular membranes leading to virus entry into the host cell. Following initial binding to its host receptors, membrane fusion is mediated by the fusion machinery composed at least of gB and the heterodimer gH/gL. May be involved in the fusion between the virion envelope and the outer nuclear membrane during virion egress.</text>
</comment>
<comment type="subunit">
    <text evidence="1">Homotrimer; disulfide-linked. Binds to heparan sulfate proteoglycans. Interacts with gH/gL heterodimer.</text>
</comment>
<comment type="subcellular location">
    <subcellularLocation>
        <location evidence="1">Virion membrane</location>
        <topology evidence="1">Single-pass type I membrane protein</topology>
    </subcellularLocation>
    <subcellularLocation>
        <location evidence="1">Host cell membrane</location>
        <topology evidence="1">Single-pass type I membrane protein</topology>
    </subcellularLocation>
    <subcellularLocation>
        <location evidence="1">Host endosome membrane</location>
        <topology evidence="1">Single-pass type I membrane protein</topology>
    </subcellularLocation>
    <subcellularLocation>
        <location evidence="1">Host Golgi apparatus membrane</location>
        <topology evidence="1">Single-pass type I membrane protein</topology>
    </subcellularLocation>
    <text evidence="1">During virion morphogenesis, this protein probably accumulates in the endosomes and trans-Golgi where secondary envelopment occurs. It is probably transported to the cell surface from where it is endocytosed and directed to the trans-Golgi network (TGN).</text>
</comment>
<comment type="similarity">
    <text evidence="1">Belongs to the herpesviridae glycoprotein B family.</text>
</comment>
<keyword id="KW-1015">Disulfide bond</keyword>
<keyword id="KW-0325">Glycoprotein</keyword>
<keyword id="KW-1032">Host cell membrane</keyword>
<keyword id="KW-1039">Host endosome</keyword>
<keyword id="KW-1040">Host Golgi apparatus</keyword>
<keyword id="KW-1043">Host membrane</keyword>
<keyword id="KW-0945">Host-virus interaction</keyword>
<keyword id="KW-0472">Membrane</keyword>
<keyword id="KW-0732">Signal</keyword>
<keyword id="KW-0812">Transmembrane</keyword>
<keyword id="KW-1133">Transmembrane helix</keyword>
<keyword id="KW-1161">Viral attachment to host cell</keyword>
<keyword id="KW-0261">Viral envelope protein</keyword>
<keyword id="KW-0946">Virion</keyword>
<keyword id="KW-1160">Virus entry into host cell</keyword>
<feature type="signal peptide" evidence="1">
    <location>
        <begin position="1"/>
        <end position="22"/>
    </location>
</feature>
<feature type="chain" id="PRO_0000038165" description="Envelope glycoprotein B" evidence="1">
    <location>
        <begin position="23"/>
        <end position="904"/>
    </location>
</feature>
<feature type="topological domain" description="Virion surface" evidence="1">
    <location>
        <begin position="23"/>
        <end position="771"/>
    </location>
</feature>
<feature type="transmembrane region" description="Helical" evidence="1">
    <location>
        <begin position="772"/>
        <end position="792"/>
    </location>
</feature>
<feature type="topological domain" description="Intravirion" evidence="1">
    <location>
        <begin position="793"/>
        <end position="904"/>
    </location>
</feature>
<feature type="region of interest" description="Disordered" evidence="2">
    <location>
        <begin position="40"/>
        <end position="83"/>
    </location>
</feature>
<feature type="region of interest" description="Involved in fusion and/or binding to host membrane" evidence="1">
    <location>
        <begin position="168"/>
        <end position="174"/>
    </location>
</feature>
<feature type="region of interest" description="Involved in fusion and/or binding to host membrane" evidence="1">
    <location>
        <begin position="253"/>
        <end position="260"/>
    </location>
</feature>
<feature type="region of interest" description="Disordered" evidence="2">
    <location>
        <begin position="467"/>
        <end position="490"/>
    </location>
</feature>
<feature type="region of interest" description="Hydrophobic membrane proximal region" evidence="1">
    <location>
        <begin position="716"/>
        <end position="769"/>
    </location>
</feature>
<feature type="region of interest" description="Hydrophobic membrane proximal region">
    <location>
        <begin position="728"/>
        <end position="768"/>
    </location>
</feature>
<feature type="region of interest" description="Disordered" evidence="2">
    <location>
        <begin position="816"/>
        <end position="835"/>
    </location>
</feature>
<feature type="region of interest" description="Disordered" evidence="2">
    <location>
        <begin position="883"/>
        <end position="904"/>
    </location>
</feature>
<feature type="short sequence motif" description="Golgi targeting" evidence="1">
    <location>
        <begin position="849"/>
        <end position="852"/>
    </location>
</feature>
<feature type="short sequence motif" description="Internalization motif" evidence="1">
    <location>
        <begin position="889"/>
        <end position="892"/>
    </location>
</feature>
<feature type="compositionally biased region" description="Basic residues" evidence="2">
    <location>
        <begin position="60"/>
        <end position="70"/>
    </location>
</feature>
<feature type="glycosylation site" description="N-linked (GlcNAc...) asparagine; by host" evidence="1">
    <location>
        <position position="82"/>
    </location>
</feature>
<feature type="glycosylation site" description="N-linked (GlcNAc...) asparagine; by host" evidence="1">
    <location>
        <position position="136"/>
    </location>
</feature>
<feature type="glycosylation site" description="N-linked (GlcNAc...) asparagine; by host" evidence="1">
    <location>
        <position position="393"/>
    </location>
</feature>
<feature type="glycosylation site" description="N-linked (GlcNAc...) asparagine; by host" evidence="1">
    <location>
        <position position="425"/>
    </location>
</feature>
<feature type="glycosylation site" description="N-linked (GlcNAc...) asparagine; by host" evidence="1">
    <location>
        <position position="486"/>
    </location>
</feature>
<feature type="glycosylation site" description="N-linked (GlcNAc...) asparagine; by host" evidence="1">
    <location>
        <position position="671"/>
    </location>
</feature>
<feature type="disulfide bond" evidence="1 3">
    <location>
        <begin position="111"/>
        <end position="570"/>
    </location>
</feature>
<feature type="disulfide bond" evidence="1 3">
    <location>
        <begin position="128"/>
        <end position="526"/>
    </location>
</feature>
<feature type="disulfide bond" evidence="1 3">
    <location>
        <begin position="202"/>
        <end position="266"/>
    </location>
</feature>
<feature type="disulfide bond" evidence="1 3">
    <location>
        <begin position="359"/>
        <end position="407"/>
    </location>
</feature>
<feature type="disulfide bond" evidence="1 3">
    <location>
        <begin position="593"/>
        <end position="630"/>
    </location>
</feature>
<feature type="sequence conflict" description="In Ref. 2; AAA60540." evidence="4" ref="2">
    <original>GVAATVA</original>
    <variation>AWPTV</variation>
    <location>
        <begin position="35"/>
        <end position="41"/>
    </location>
</feature>
<feature type="sequence conflict" description="In Ref. 2; AAA60540." evidence="4" ref="2">
    <original>S</original>
    <variation>T</variation>
    <location>
        <position position="308"/>
    </location>
</feature>
<feature type="sequence conflict" description="In Ref. 2; AAA60540." evidence="4" ref="2">
    <original>A</original>
    <variation>R</variation>
    <location>
        <position position="482"/>
    </location>
</feature>
<feature type="sequence conflict" description="In Ref. 2; AAA60540." evidence="4" ref="2">
    <original>I</original>
    <variation>M</variation>
    <location>
        <position position="610"/>
    </location>
</feature>
<feature type="sequence conflict" description="In Ref. 2; AAA60540." evidence="4" ref="2">
    <original>S</original>
    <variation>R</variation>
    <location>
        <position position="665"/>
    </location>
</feature>
<proteinExistence type="evidence at protein level"/>
<accession>P06763</accession>
<accession>Q69095</accession>
<evidence type="ECO:0000255" key="1">
    <source>
        <dbReference type="HAMAP-Rule" id="MF_04032"/>
    </source>
</evidence>
<evidence type="ECO:0000256" key="2">
    <source>
        <dbReference type="SAM" id="MobiDB-lite"/>
    </source>
</evidence>
<evidence type="ECO:0000269" key="3">
    <source>
    </source>
</evidence>
<evidence type="ECO:0000305" key="4"/>
<name>GB_HHV23</name>
<gene>
    <name evidence="1" type="primary">gB</name>
    <name type="ORF">UL27</name>
</gene>
<sequence>MRGGGLICALVVGALVAAVASAAPAAPAAPRASGGVAATVAANGGPASRPPPVPSPATTKARKRKTKKPPKRPEATPPPDANATVAAGHATLRAHLREIKVENADAQFYVCPPPTGATVVQFEQPRRCPTRPEGQNYTEGIAVVFKENIAPYKFKATMYYKDVTVSQVWFGHRYSQFMGIFEDRAPVPFEEVIDKINAKGVCRSTAKYVRNNMETTAFHRDDHETDMELKPAKVATRTSRGWHTTDLKYNPSRVEAFHRYGTTVNCIVEEVDARSVYPYDEFVLATGDFVYMSPFYGYREGSHTEHTSYAADRFKQVDGFYARDLTTKARATSPTTRNLLTTPKFTVAWDWVPKRPAVCTMTKWQEVDEMLRAEYGGSFRFSSDAISTTFTTNLTQYSLSRVDLGDCIGRDAREAIDRMFARKYNATHIKVGQPQYYLATGGFLIAYQPLLSNTLAELYVREYMREQDRKPRNATPAPLREAPSANASVERIKTTSSIEFARLQFTYNHIQRHVNDMLGRIAVAWCELQNHELTLWNEARKLNPNAIASATVGRRVSARMLGDVMAVSTCVPVAPDNVIVQNSMRVSSRPGTCYSRPLVSFRYEDQGPLIEGQLGENNELRLTRDALEPCTVGHRRYFIFGGGYVYFEEYAYSHQLSRADVTTVSTFIDLNITMLEDHEFVPLEVYTRHEIKDSGLLDYTEVQRRNQLHDLRFADIDTVIRADANAAMFAGLCAFFEGMGDLGRAVGKVVMGVVGGVVSAVSGVSSFMSNPFGALAVGLLVLAGLVAAFFAFRYVLQLQRNPMKALYPLTTKELKTSDPGGVGGEGEEGAEGGGFDEAKLAEAREMIRYMALVSAMERTEHKARKKGTSALLSSKVTNMVLRKRNKARYSPLHNEDEAGDEDEL</sequence>
<dbReference type="EMBL" id="M15118">
    <property type="protein sequence ID" value="AAA45837.1"/>
    <property type="molecule type" value="Genomic_DNA"/>
</dbReference>
<dbReference type="EMBL" id="M24771">
    <property type="protein sequence ID" value="AAA60540.1"/>
    <property type="molecule type" value="Genomic_DNA"/>
</dbReference>
<dbReference type="PIR" id="A26790">
    <property type="entry name" value="VGBEB2"/>
</dbReference>
<dbReference type="SMR" id="P06763"/>
<dbReference type="GlyCosmos" id="P06763">
    <property type="glycosylation" value="6 sites, No reported glycans"/>
</dbReference>
<dbReference type="GO" id="GO:0044175">
    <property type="term" value="C:host cell endosome membrane"/>
    <property type="evidence" value="ECO:0007669"/>
    <property type="project" value="UniProtKB-SubCell"/>
</dbReference>
<dbReference type="GO" id="GO:0044178">
    <property type="term" value="C:host cell Golgi membrane"/>
    <property type="evidence" value="ECO:0007669"/>
    <property type="project" value="UniProtKB-SubCell"/>
</dbReference>
<dbReference type="GO" id="GO:0020002">
    <property type="term" value="C:host cell plasma membrane"/>
    <property type="evidence" value="ECO:0007669"/>
    <property type="project" value="UniProtKB-SubCell"/>
</dbReference>
<dbReference type="GO" id="GO:0016020">
    <property type="term" value="C:membrane"/>
    <property type="evidence" value="ECO:0007669"/>
    <property type="project" value="UniProtKB-KW"/>
</dbReference>
<dbReference type="GO" id="GO:0019031">
    <property type="term" value="C:viral envelope"/>
    <property type="evidence" value="ECO:0007669"/>
    <property type="project" value="UniProtKB-KW"/>
</dbReference>
<dbReference type="GO" id="GO:0055036">
    <property type="term" value="C:virion membrane"/>
    <property type="evidence" value="ECO:0007669"/>
    <property type="project" value="UniProtKB-SubCell"/>
</dbReference>
<dbReference type="GO" id="GO:0046718">
    <property type="term" value="P:symbiont entry into host cell"/>
    <property type="evidence" value="ECO:0007669"/>
    <property type="project" value="UniProtKB-KW"/>
</dbReference>
<dbReference type="GO" id="GO:0019062">
    <property type="term" value="P:virion attachment to host cell"/>
    <property type="evidence" value="ECO:0007669"/>
    <property type="project" value="UniProtKB-KW"/>
</dbReference>
<dbReference type="FunFam" id="1.20.5.1890:FF:000001">
    <property type="entry name" value="Envelope glycoprotein B"/>
    <property type="match status" value="1"/>
</dbReference>
<dbReference type="FunFam" id="2.30.29.100:FF:000001">
    <property type="entry name" value="Envelope glycoprotein B"/>
    <property type="match status" value="1"/>
</dbReference>
<dbReference type="FunFam" id="2.30.30.1230:FF:000001">
    <property type="entry name" value="Envelope glycoprotein B"/>
    <property type="match status" value="1"/>
</dbReference>
<dbReference type="FunFam" id="6.10.250.3280:FF:000001">
    <property type="entry name" value="Envelope glycoprotein B"/>
    <property type="match status" value="1"/>
</dbReference>
<dbReference type="Gene3D" id="1.20.5.1890">
    <property type="match status" value="1"/>
</dbReference>
<dbReference type="Gene3D" id="2.30.29.100">
    <property type="match status" value="1"/>
</dbReference>
<dbReference type="Gene3D" id="2.30.30.1230">
    <property type="match status" value="1"/>
</dbReference>
<dbReference type="Gene3D" id="6.10.250.3280">
    <property type="match status" value="1"/>
</dbReference>
<dbReference type="HAMAP" id="MF_04032">
    <property type="entry name" value="HSV_GB"/>
    <property type="match status" value="1"/>
</dbReference>
<dbReference type="InterPro" id="IPR035377">
    <property type="entry name" value="Glycoprot_B_PH1"/>
</dbReference>
<dbReference type="InterPro" id="IPR035381">
    <property type="entry name" value="Glycoprot_B_PH2"/>
</dbReference>
<dbReference type="InterPro" id="IPR038631">
    <property type="entry name" value="Glycoprot_B_PH2_sf"/>
</dbReference>
<dbReference type="InterPro" id="IPR055341">
    <property type="entry name" value="Glycoprotein_B_ecto_C"/>
</dbReference>
<dbReference type="InterPro" id="IPR000234">
    <property type="entry name" value="Herpes_Glycoprot_B"/>
</dbReference>
<dbReference type="Pfam" id="PF17416">
    <property type="entry name" value="Glycoprot_B_PH1"/>
    <property type="match status" value="1"/>
</dbReference>
<dbReference type="Pfam" id="PF17417">
    <property type="entry name" value="Glycoprot_B_PH2"/>
    <property type="match status" value="1"/>
</dbReference>
<dbReference type="Pfam" id="PF00606">
    <property type="entry name" value="Glycoprotein_B"/>
    <property type="match status" value="1"/>
</dbReference>
<dbReference type="SUPFAM" id="SSF161008">
    <property type="entry name" value="Viral glycoprotein ectodomain-like"/>
    <property type="match status" value="1"/>
</dbReference>
<protein>
    <recommendedName>
        <fullName evidence="1">Envelope glycoprotein B</fullName>
        <shortName evidence="1">gB</shortName>
    </recommendedName>
</protein>